<name>RS16_CHLTR</name>
<dbReference type="EMBL" id="AE001273">
    <property type="protein sequence ID" value="AAC67616.1"/>
    <property type="molecule type" value="Genomic_DNA"/>
</dbReference>
<dbReference type="PIR" id="E71566">
    <property type="entry name" value="E71566"/>
</dbReference>
<dbReference type="RefSeq" id="NP_219528.1">
    <property type="nucleotide sequence ID" value="NC_000117.1"/>
</dbReference>
<dbReference type="RefSeq" id="WP_009871373.1">
    <property type="nucleotide sequence ID" value="NC_000117.1"/>
</dbReference>
<dbReference type="SMR" id="O84029"/>
<dbReference type="FunCoup" id="O84029">
    <property type="interactions" value="267"/>
</dbReference>
<dbReference type="STRING" id="272561.CT_026"/>
<dbReference type="EnsemblBacteria" id="AAC67616">
    <property type="protein sequence ID" value="AAC67616"/>
    <property type="gene ID" value="CT_026"/>
</dbReference>
<dbReference type="GeneID" id="884177"/>
<dbReference type="KEGG" id="ctr:CT_026"/>
<dbReference type="PATRIC" id="fig|272561.5.peg.31"/>
<dbReference type="HOGENOM" id="CLU_100590_3_1_0"/>
<dbReference type="InParanoid" id="O84029"/>
<dbReference type="OrthoDB" id="9807878at2"/>
<dbReference type="Proteomes" id="UP000000431">
    <property type="component" value="Chromosome"/>
</dbReference>
<dbReference type="GO" id="GO:0005737">
    <property type="term" value="C:cytoplasm"/>
    <property type="evidence" value="ECO:0007669"/>
    <property type="project" value="UniProtKB-ARBA"/>
</dbReference>
<dbReference type="GO" id="GO:0015935">
    <property type="term" value="C:small ribosomal subunit"/>
    <property type="evidence" value="ECO:0000318"/>
    <property type="project" value="GO_Central"/>
</dbReference>
<dbReference type="GO" id="GO:0003735">
    <property type="term" value="F:structural constituent of ribosome"/>
    <property type="evidence" value="ECO:0000318"/>
    <property type="project" value="GO_Central"/>
</dbReference>
<dbReference type="GO" id="GO:0006412">
    <property type="term" value="P:translation"/>
    <property type="evidence" value="ECO:0007669"/>
    <property type="project" value="UniProtKB-UniRule"/>
</dbReference>
<dbReference type="FunFam" id="3.30.1320.10:FF:000015">
    <property type="entry name" value="30S ribosomal protein S16"/>
    <property type="match status" value="1"/>
</dbReference>
<dbReference type="Gene3D" id="3.30.1320.10">
    <property type="match status" value="1"/>
</dbReference>
<dbReference type="HAMAP" id="MF_00385">
    <property type="entry name" value="Ribosomal_bS16"/>
    <property type="match status" value="1"/>
</dbReference>
<dbReference type="InterPro" id="IPR000307">
    <property type="entry name" value="Ribosomal_bS16"/>
</dbReference>
<dbReference type="InterPro" id="IPR023803">
    <property type="entry name" value="Ribosomal_bS16_dom_sf"/>
</dbReference>
<dbReference type="NCBIfam" id="NF011095">
    <property type="entry name" value="PRK14522.1"/>
    <property type="match status" value="1"/>
</dbReference>
<dbReference type="NCBIfam" id="TIGR00002">
    <property type="entry name" value="S16"/>
    <property type="match status" value="1"/>
</dbReference>
<dbReference type="PANTHER" id="PTHR12919">
    <property type="entry name" value="30S RIBOSOMAL PROTEIN S16"/>
    <property type="match status" value="1"/>
</dbReference>
<dbReference type="PANTHER" id="PTHR12919:SF20">
    <property type="entry name" value="SMALL RIBOSOMAL SUBUNIT PROTEIN BS16M"/>
    <property type="match status" value="1"/>
</dbReference>
<dbReference type="Pfam" id="PF00886">
    <property type="entry name" value="Ribosomal_S16"/>
    <property type="match status" value="1"/>
</dbReference>
<dbReference type="SUPFAM" id="SSF54565">
    <property type="entry name" value="Ribosomal protein S16"/>
    <property type="match status" value="1"/>
</dbReference>
<sequence>MALKIRLRQQGRKNHVVYRLVLADVESPRDGKYIELLGWYDPHSEQNYQLKSERIFYWLNQGAELTEKAGALVKQGAPGVYAELMAKKVARRAVVRQKRRAYRQRLAARKAEAAAK</sequence>
<protein>
    <recommendedName>
        <fullName evidence="1">Small ribosomal subunit protein bS16</fullName>
    </recommendedName>
    <alternativeName>
        <fullName evidence="2">30S ribosomal protein S16</fullName>
    </alternativeName>
</protein>
<evidence type="ECO:0000255" key="1">
    <source>
        <dbReference type="HAMAP-Rule" id="MF_00385"/>
    </source>
</evidence>
<evidence type="ECO:0000305" key="2"/>
<comment type="similarity">
    <text evidence="1">Belongs to the bacterial ribosomal protein bS16 family.</text>
</comment>
<keyword id="KW-1185">Reference proteome</keyword>
<keyword id="KW-0687">Ribonucleoprotein</keyword>
<keyword id="KW-0689">Ribosomal protein</keyword>
<reference key="1">
    <citation type="journal article" date="1998" name="Science">
        <title>Genome sequence of an obligate intracellular pathogen of humans: Chlamydia trachomatis.</title>
        <authorList>
            <person name="Stephens R.S."/>
            <person name="Kalman S."/>
            <person name="Lammel C.J."/>
            <person name="Fan J."/>
            <person name="Marathe R."/>
            <person name="Aravind L."/>
            <person name="Mitchell W.P."/>
            <person name="Olinger L."/>
            <person name="Tatusov R.L."/>
            <person name="Zhao Q."/>
            <person name="Koonin E.V."/>
            <person name="Davis R.W."/>
        </authorList>
    </citation>
    <scope>NUCLEOTIDE SEQUENCE [LARGE SCALE GENOMIC DNA]</scope>
    <source>
        <strain>ATCC VR-885 / DSM 19411 / UW-3/Cx</strain>
    </source>
</reference>
<gene>
    <name evidence="1" type="primary">rpsP</name>
    <name type="synonym">rs16</name>
    <name type="ordered locus">CT_026</name>
</gene>
<accession>O84029</accession>
<proteinExistence type="inferred from homology"/>
<organism>
    <name type="scientific">Chlamydia trachomatis serovar D (strain ATCC VR-885 / DSM 19411 / UW-3/Cx)</name>
    <dbReference type="NCBI Taxonomy" id="272561"/>
    <lineage>
        <taxon>Bacteria</taxon>
        <taxon>Pseudomonadati</taxon>
        <taxon>Chlamydiota</taxon>
        <taxon>Chlamydiia</taxon>
        <taxon>Chlamydiales</taxon>
        <taxon>Chlamydiaceae</taxon>
        <taxon>Chlamydia/Chlamydophila group</taxon>
        <taxon>Chlamydia</taxon>
    </lineage>
</organism>
<feature type="chain" id="PRO_0000167174" description="Small ribosomal subunit protein bS16">
    <location>
        <begin position="1"/>
        <end position="116"/>
    </location>
</feature>